<reference key="1">
    <citation type="journal article" date="2009" name="J. Bacteriol.">
        <title>Genome sequence of the probiotic bacterium Bifidobacterium animalis subsp. lactis AD011.</title>
        <authorList>
            <person name="Kim J.F."/>
            <person name="Jeong H."/>
            <person name="Yu D.S."/>
            <person name="Choi S.-H."/>
            <person name="Hur C.-G."/>
            <person name="Park M.-S."/>
            <person name="Yoon S.H."/>
            <person name="Kim D.-W."/>
            <person name="Ji G.E."/>
            <person name="Park H.-S."/>
            <person name="Oh T.K."/>
        </authorList>
    </citation>
    <scope>NUCLEOTIDE SEQUENCE [LARGE SCALE GENOMIC DNA]</scope>
    <source>
        <strain>AD011</strain>
    </source>
</reference>
<proteinExistence type="inferred from homology"/>
<dbReference type="EMBL" id="CP001213">
    <property type="protein sequence ID" value="ACL28982.1"/>
    <property type="molecule type" value="Genomic_DNA"/>
</dbReference>
<dbReference type="RefSeq" id="WP_004219094.1">
    <property type="nucleotide sequence ID" value="NC_011835.1"/>
</dbReference>
<dbReference type="SMR" id="B8DSK3"/>
<dbReference type="STRING" id="442563.BLA_0689"/>
<dbReference type="GeneID" id="29696495"/>
<dbReference type="KEGG" id="bla:BLA_0689"/>
<dbReference type="HOGENOM" id="CLU_078938_5_1_11"/>
<dbReference type="Proteomes" id="UP000002456">
    <property type="component" value="Chromosome"/>
</dbReference>
<dbReference type="GO" id="GO:1990904">
    <property type="term" value="C:ribonucleoprotein complex"/>
    <property type="evidence" value="ECO:0007669"/>
    <property type="project" value="UniProtKB-KW"/>
</dbReference>
<dbReference type="GO" id="GO:0005840">
    <property type="term" value="C:ribosome"/>
    <property type="evidence" value="ECO:0007669"/>
    <property type="project" value="UniProtKB-KW"/>
</dbReference>
<dbReference type="GO" id="GO:0019843">
    <property type="term" value="F:rRNA binding"/>
    <property type="evidence" value="ECO:0007669"/>
    <property type="project" value="UniProtKB-UniRule"/>
</dbReference>
<dbReference type="GO" id="GO:0003735">
    <property type="term" value="F:structural constituent of ribosome"/>
    <property type="evidence" value="ECO:0007669"/>
    <property type="project" value="InterPro"/>
</dbReference>
<dbReference type="GO" id="GO:0006412">
    <property type="term" value="P:translation"/>
    <property type="evidence" value="ECO:0007669"/>
    <property type="project" value="UniProtKB-UniRule"/>
</dbReference>
<dbReference type="FunFam" id="3.40.5.10:FF:000003">
    <property type="entry name" value="50S ribosomal protein L9"/>
    <property type="match status" value="1"/>
</dbReference>
<dbReference type="Gene3D" id="3.10.430.100">
    <property type="entry name" value="Ribosomal protein L9, C-terminal domain"/>
    <property type="match status" value="1"/>
</dbReference>
<dbReference type="Gene3D" id="3.40.5.10">
    <property type="entry name" value="Ribosomal protein L9, N-terminal domain"/>
    <property type="match status" value="1"/>
</dbReference>
<dbReference type="HAMAP" id="MF_00503">
    <property type="entry name" value="Ribosomal_bL9"/>
    <property type="match status" value="1"/>
</dbReference>
<dbReference type="InterPro" id="IPR000244">
    <property type="entry name" value="Ribosomal_bL9"/>
</dbReference>
<dbReference type="InterPro" id="IPR009027">
    <property type="entry name" value="Ribosomal_bL9/RNase_H1_N"/>
</dbReference>
<dbReference type="InterPro" id="IPR020594">
    <property type="entry name" value="Ribosomal_bL9_bac/chp"/>
</dbReference>
<dbReference type="InterPro" id="IPR020069">
    <property type="entry name" value="Ribosomal_bL9_C"/>
</dbReference>
<dbReference type="InterPro" id="IPR036791">
    <property type="entry name" value="Ribosomal_bL9_C_sf"/>
</dbReference>
<dbReference type="InterPro" id="IPR020070">
    <property type="entry name" value="Ribosomal_bL9_N"/>
</dbReference>
<dbReference type="InterPro" id="IPR036935">
    <property type="entry name" value="Ribosomal_bL9_N_sf"/>
</dbReference>
<dbReference type="NCBIfam" id="TIGR00158">
    <property type="entry name" value="L9"/>
    <property type="match status" value="1"/>
</dbReference>
<dbReference type="PANTHER" id="PTHR21368">
    <property type="entry name" value="50S RIBOSOMAL PROTEIN L9"/>
    <property type="match status" value="1"/>
</dbReference>
<dbReference type="Pfam" id="PF03948">
    <property type="entry name" value="Ribosomal_L9_C"/>
    <property type="match status" value="1"/>
</dbReference>
<dbReference type="Pfam" id="PF01281">
    <property type="entry name" value="Ribosomal_L9_N"/>
    <property type="match status" value="1"/>
</dbReference>
<dbReference type="SUPFAM" id="SSF55658">
    <property type="entry name" value="L9 N-domain-like"/>
    <property type="match status" value="1"/>
</dbReference>
<dbReference type="SUPFAM" id="SSF55653">
    <property type="entry name" value="Ribosomal protein L9 C-domain"/>
    <property type="match status" value="1"/>
</dbReference>
<dbReference type="PROSITE" id="PS00651">
    <property type="entry name" value="RIBOSOMAL_L9"/>
    <property type="match status" value="1"/>
</dbReference>
<accession>B8DSK3</accession>
<gene>
    <name evidence="1" type="primary">rplI</name>
    <name type="ordered locus">BLA_0689</name>
</gene>
<sequence>MATTKIILKKSVNNLGHAGDIVEVKAGYARNYLIPQGYAFPWTKGAAAQAEAMKRARLAKAIATREGAVEAKQIIEGTAVEIFAKVSESGKLFGGISNEQIANALAEKVAVDPKGITVEKIQTLGEFPATVALHPEISANFFVKVVAE</sequence>
<organism>
    <name type="scientific">Bifidobacterium animalis subsp. lactis (strain AD011)</name>
    <dbReference type="NCBI Taxonomy" id="442563"/>
    <lineage>
        <taxon>Bacteria</taxon>
        <taxon>Bacillati</taxon>
        <taxon>Actinomycetota</taxon>
        <taxon>Actinomycetes</taxon>
        <taxon>Bifidobacteriales</taxon>
        <taxon>Bifidobacteriaceae</taxon>
        <taxon>Bifidobacterium</taxon>
    </lineage>
</organism>
<feature type="chain" id="PRO_1000196225" description="Large ribosomal subunit protein bL9">
    <location>
        <begin position="1"/>
        <end position="148"/>
    </location>
</feature>
<comment type="function">
    <text evidence="1">Binds to the 23S rRNA.</text>
</comment>
<comment type="similarity">
    <text evidence="1">Belongs to the bacterial ribosomal protein bL9 family.</text>
</comment>
<evidence type="ECO:0000255" key="1">
    <source>
        <dbReference type="HAMAP-Rule" id="MF_00503"/>
    </source>
</evidence>
<evidence type="ECO:0000305" key="2"/>
<name>RL9_BIFA0</name>
<keyword id="KW-1185">Reference proteome</keyword>
<keyword id="KW-0687">Ribonucleoprotein</keyword>
<keyword id="KW-0689">Ribosomal protein</keyword>
<keyword id="KW-0694">RNA-binding</keyword>
<keyword id="KW-0699">rRNA-binding</keyword>
<protein>
    <recommendedName>
        <fullName evidence="1">Large ribosomal subunit protein bL9</fullName>
    </recommendedName>
    <alternativeName>
        <fullName evidence="2">50S ribosomal protein L9</fullName>
    </alternativeName>
</protein>